<evidence type="ECO:0000255" key="1">
    <source>
        <dbReference type="HAMAP-Rule" id="MF_01217"/>
    </source>
</evidence>
<evidence type="ECO:0000255" key="2">
    <source>
        <dbReference type="PROSITE-ProRule" id="PRU00258"/>
    </source>
</evidence>
<dbReference type="EMBL" id="CP000970">
    <property type="protein sequence ID" value="ACB17177.1"/>
    <property type="molecule type" value="Genomic_DNA"/>
</dbReference>
<dbReference type="RefSeq" id="WP_000103754.1">
    <property type="nucleotide sequence ID" value="NC_010498.1"/>
</dbReference>
<dbReference type="SMR" id="B1LI51"/>
<dbReference type="GeneID" id="98387866"/>
<dbReference type="KEGG" id="ecm:EcSMS35_2033"/>
<dbReference type="HOGENOM" id="CLU_108696_5_1_6"/>
<dbReference type="UniPathway" id="UPA00094"/>
<dbReference type="Proteomes" id="UP000007011">
    <property type="component" value="Chromosome"/>
</dbReference>
<dbReference type="GO" id="GO:0005829">
    <property type="term" value="C:cytosol"/>
    <property type="evidence" value="ECO:0007669"/>
    <property type="project" value="TreeGrafter"/>
</dbReference>
<dbReference type="GO" id="GO:0016020">
    <property type="term" value="C:membrane"/>
    <property type="evidence" value="ECO:0007669"/>
    <property type="project" value="GOC"/>
</dbReference>
<dbReference type="GO" id="GO:0000035">
    <property type="term" value="F:acyl binding"/>
    <property type="evidence" value="ECO:0007669"/>
    <property type="project" value="TreeGrafter"/>
</dbReference>
<dbReference type="GO" id="GO:0000036">
    <property type="term" value="F:acyl carrier activity"/>
    <property type="evidence" value="ECO:0007669"/>
    <property type="project" value="UniProtKB-UniRule"/>
</dbReference>
<dbReference type="GO" id="GO:0009245">
    <property type="term" value="P:lipid A biosynthetic process"/>
    <property type="evidence" value="ECO:0007669"/>
    <property type="project" value="TreeGrafter"/>
</dbReference>
<dbReference type="FunFam" id="1.10.1200.10:FF:000001">
    <property type="entry name" value="Acyl carrier protein"/>
    <property type="match status" value="1"/>
</dbReference>
<dbReference type="Gene3D" id="1.10.1200.10">
    <property type="entry name" value="ACP-like"/>
    <property type="match status" value="1"/>
</dbReference>
<dbReference type="HAMAP" id="MF_01217">
    <property type="entry name" value="Acyl_carrier"/>
    <property type="match status" value="1"/>
</dbReference>
<dbReference type="InterPro" id="IPR003231">
    <property type="entry name" value="ACP"/>
</dbReference>
<dbReference type="InterPro" id="IPR036736">
    <property type="entry name" value="ACP-like_sf"/>
</dbReference>
<dbReference type="InterPro" id="IPR009081">
    <property type="entry name" value="PP-bd_ACP"/>
</dbReference>
<dbReference type="InterPro" id="IPR006162">
    <property type="entry name" value="Ppantetheine_attach_site"/>
</dbReference>
<dbReference type="NCBIfam" id="TIGR00517">
    <property type="entry name" value="acyl_carrier"/>
    <property type="match status" value="1"/>
</dbReference>
<dbReference type="NCBIfam" id="NF002148">
    <property type="entry name" value="PRK00982.1-2"/>
    <property type="match status" value="1"/>
</dbReference>
<dbReference type="NCBIfam" id="NF002149">
    <property type="entry name" value="PRK00982.1-3"/>
    <property type="match status" value="1"/>
</dbReference>
<dbReference type="NCBIfam" id="NF002150">
    <property type="entry name" value="PRK00982.1-4"/>
    <property type="match status" value="1"/>
</dbReference>
<dbReference type="NCBIfam" id="NF002151">
    <property type="entry name" value="PRK00982.1-5"/>
    <property type="match status" value="1"/>
</dbReference>
<dbReference type="PANTHER" id="PTHR20863">
    <property type="entry name" value="ACYL CARRIER PROTEIN"/>
    <property type="match status" value="1"/>
</dbReference>
<dbReference type="PANTHER" id="PTHR20863:SF76">
    <property type="entry name" value="CARRIER DOMAIN-CONTAINING PROTEIN"/>
    <property type="match status" value="1"/>
</dbReference>
<dbReference type="Pfam" id="PF00550">
    <property type="entry name" value="PP-binding"/>
    <property type="match status" value="1"/>
</dbReference>
<dbReference type="SUPFAM" id="SSF47336">
    <property type="entry name" value="ACP-like"/>
    <property type="match status" value="1"/>
</dbReference>
<dbReference type="PROSITE" id="PS50075">
    <property type="entry name" value="CARRIER"/>
    <property type="match status" value="1"/>
</dbReference>
<dbReference type="PROSITE" id="PS00012">
    <property type="entry name" value="PHOSPHOPANTETHEINE"/>
    <property type="match status" value="1"/>
</dbReference>
<accession>B1LI51</accession>
<feature type="chain" id="PRO_1000139026" description="Acyl carrier protein">
    <location>
        <begin position="1"/>
        <end position="78"/>
    </location>
</feature>
<feature type="domain" description="Carrier" evidence="2">
    <location>
        <begin position="2"/>
        <end position="77"/>
    </location>
</feature>
<feature type="modified residue" description="O-(pantetheine 4'-phosphoryl)serine" evidence="2">
    <location>
        <position position="37"/>
    </location>
</feature>
<reference key="1">
    <citation type="journal article" date="2008" name="J. Bacteriol.">
        <title>Insights into the environmental resistance gene pool from the genome sequence of the multidrug-resistant environmental isolate Escherichia coli SMS-3-5.</title>
        <authorList>
            <person name="Fricke W.F."/>
            <person name="Wright M.S."/>
            <person name="Lindell A.H."/>
            <person name="Harkins D.M."/>
            <person name="Baker-Austin C."/>
            <person name="Ravel J."/>
            <person name="Stepanauskas R."/>
        </authorList>
    </citation>
    <scope>NUCLEOTIDE SEQUENCE [LARGE SCALE GENOMIC DNA]</scope>
    <source>
        <strain>SMS-3-5 / SECEC</strain>
    </source>
</reference>
<protein>
    <recommendedName>
        <fullName evidence="1">Acyl carrier protein</fullName>
        <shortName evidence="1">ACP</shortName>
    </recommendedName>
</protein>
<gene>
    <name evidence="1" type="primary">acpP</name>
    <name type="ordered locus">EcSMS35_2033</name>
</gene>
<keyword id="KW-0963">Cytoplasm</keyword>
<keyword id="KW-0275">Fatty acid biosynthesis</keyword>
<keyword id="KW-0276">Fatty acid metabolism</keyword>
<keyword id="KW-0444">Lipid biosynthesis</keyword>
<keyword id="KW-0443">Lipid metabolism</keyword>
<keyword id="KW-0596">Phosphopantetheine</keyword>
<keyword id="KW-0597">Phosphoprotein</keyword>
<name>ACP_ECOSM</name>
<sequence length="78" mass="8640">MSTIEERVKKIIGEQLGVKQEEVTNNASFVEDLGADSLDTVELVMALEEEFDTEIPDEEAEKITTVQAAIDYINGHQA</sequence>
<comment type="function">
    <text evidence="1">Carrier of the growing fatty acid chain in fatty acid biosynthesis.</text>
</comment>
<comment type="pathway">
    <text evidence="1">Lipid metabolism; fatty acid biosynthesis.</text>
</comment>
<comment type="subcellular location">
    <subcellularLocation>
        <location evidence="1">Cytoplasm</location>
    </subcellularLocation>
</comment>
<comment type="PTM">
    <text evidence="1">4'-phosphopantetheine is transferred from CoA to a specific serine of apo-ACP by AcpS. This modification is essential for activity because fatty acids are bound in thioester linkage to the sulfhydryl of the prosthetic group.</text>
</comment>
<comment type="similarity">
    <text evidence="1">Belongs to the acyl carrier protein (ACP) family.</text>
</comment>
<proteinExistence type="inferred from homology"/>
<organism>
    <name type="scientific">Escherichia coli (strain SMS-3-5 / SECEC)</name>
    <dbReference type="NCBI Taxonomy" id="439855"/>
    <lineage>
        <taxon>Bacteria</taxon>
        <taxon>Pseudomonadati</taxon>
        <taxon>Pseudomonadota</taxon>
        <taxon>Gammaproteobacteria</taxon>
        <taxon>Enterobacterales</taxon>
        <taxon>Enterobacteriaceae</taxon>
        <taxon>Escherichia</taxon>
    </lineage>
</organism>